<name>RL5_LIMRJ</name>
<gene>
    <name evidence="1" type="primary">rplE</name>
    <name type="ordered locus">LAR_1382</name>
</gene>
<dbReference type="EMBL" id="AP007281">
    <property type="protein sequence ID" value="BAG25898.1"/>
    <property type="molecule type" value="Genomic_DNA"/>
</dbReference>
<dbReference type="RefSeq" id="WP_003668784.1">
    <property type="nucleotide sequence ID" value="NC_010609.1"/>
</dbReference>
<dbReference type="SMR" id="B2G8W6"/>
<dbReference type="GeneID" id="77191467"/>
<dbReference type="KEGG" id="lrf:LAR_1382"/>
<dbReference type="HOGENOM" id="CLU_061015_2_1_9"/>
<dbReference type="GO" id="GO:1990904">
    <property type="term" value="C:ribonucleoprotein complex"/>
    <property type="evidence" value="ECO:0007669"/>
    <property type="project" value="UniProtKB-KW"/>
</dbReference>
<dbReference type="GO" id="GO:0005840">
    <property type="term" value="C:ribosome"/>
    <property type="evidence" value="ECO:0007669"/>
    <property type="project" value="UniProtKB-KW"/>
</dbReference>
<dbReference type="GO" id="GO:0019843">
    <property type="term" value="F:rRNA binding"/>
    <property type="evidence" value="ECO:0007669"/>
    <property type="project" value="UniProtKB-UniRule"/>
</dbReference>
<dbReference type="GO" id="GO:0003735">
    <property type="term" value="F:structural constituent of ribosome"/>
    <property type="evidence" value="ECO:0007669"/>
    <property type="project" value="InterPro"/>
</dbReference>
<dbReference type="GO" id="GO:0000049">
    <property type="term" value="F:tRNA binding"/>
    <property type="evidence" value="ECO:0007669"/>
    <property type="project" value="UniProtKB-UniRule"/>
</dbReference>
<dbReference type="GO" id="GO:0006412">
    <property type="term" value="P:translation"/>
    <property type="evidence" value="ECO:0007669"/>
    <property type="project" value="UniProtKB-UniRule"/>
</dbReference>
<dbReference type="FunFam" id="3.30.1440.10:FF:000001">
    <property type="entry name" value="50S ribosomal protein L5"/>
    <property type="match status" value="1"/>
</dbReference>
<dbReference type="Gene3D" id="3.30.1440.10">
    <property type="match status" value="1"/>
</dbReference>
<dbReference type="HAMAP" id="MF_01333_B">
    <property type="entry name" value="Ribosomal_uL5_B"/>
    <property type="match status" value="1"/>
</dbReference>
<dbReference type="InterPro" id="IPR002132">
    <property type="entry name" value="Ribosomal_uL5"/>
</dbReference>
<dbReference type="InterPro" id="IPR020930">
    <property type="entry name" value="Ribosomal_uL5_bac-type"/>
</dbReference>
<dbReference type="InterPro" id="IPR031309">
    <property type="entry name" value="Ribosomal_uL5_C"/>
</dbReference>
<dbReference type="InterPro" id="IPR020929">
    <property type="entry name" value="Ribosomal_uL5_CS"/>
</dbReference>
<dbReference type="InterPro" id="IPR022803">
    <property type="entry name" value="Ribosomal_uL5_dom_sf"/>
</dbReference>
<dbReference type="InterPro" id="IPR031310">
    <property type="entry name" value="Ribosomal_uL5_N"/>
</dbReference>
<dbReference type="NCBIfam" id="NF000585">
    <property type="entry name" value="PRK00010.1"/>
    <property type="match status" value="1"/>
</dbReference>
<dbReference type="PANTHER" id="PTHR11994">
    <property type="entry name" value="60S RIBOSOMAL PROTEIN L11-RELATED"/>
    <property type="match status" value="1"/>
</dbReference>
<dbReference type="Pfam" id="PF00281">
    <property type="entry name" value="Ribosomal_L5"/>
    <property type="match status" value="1"/>
</dbReference>
<dbReference type="Pfam" id="PF00673">
    <property type="entry name" value="Ribosomal_L5_C"/>
    <property type="match status" value="1"/>
</dbReference>
<dbReference type="PIRSF" id="PIRSF002161">
    <property type="entry name" value="Ribosomal_L5"/>
    <property type="match status" value="1"/>
</dbReference>
<dbReference type="SUPFAM" id="SSF55282">
    <property type="entry name" value="RL5-like"/>
    <property type="match status" value="1"/>
</dbReference>
<dbReference type="PROSITE" id="PS00358">
    <property type="entry name" value="RIBOSOMAL_L5"/>
    <property type="match status" value="1"/>
</dbReference>
<organism>
    <name type="scientific">Limosilactobacillus reuteri subsp. reuteri (strain JCM 1112)</name>
    <name type="common">Lactobacillus reuteri</name>
    <dbReference type="NCBI Taxonomy" id="557433"/>
    <lineage>
        <taxon>Bacteria</taxon>
        <taxon>Bacillati</taxon>
        <taxon>Bacillota</taxon>
        <taxon>Bacilli</taxon>
        <taxon>Lactobacillales</taxon>
        <taxon>Lactobacillaceae</taxon>
        <taxon>Limosilactobacillus</taxon>
    </lineage>
</organism>
<evidence type="ECO:0000255" key="1">
    <source>
        <dbReference type="HAMAP-Rule" id="MF_01333"/>
    </source>
</evidence>
<evidence type="ECO:0000305" key="2"/>
<protein>
    <recommendedName>
        <fullName evidence="1">Large ribosomal subunit protein uL5</fullName>
    </recommendedName>
    <alternativeName>
        <fullName evidence="2">50S ribosomal protein L5</fullName>
    </alternativeName>
</protein>
<accession>B2G8W6</accession>
<keyword id="KW-0687">Ribonucleoprotein</keyword>
<keyword id="KW-0689">Ribosomal protein</keyword>
<keyword id="KW-0694">RNA-binding</keyword>
<keyword id="KW-0699">rRNA-binding</keyword>
<keyword id="KW-0820">tRNA-binding</keyword>
<reference key="1">
    <citation type="journal article" date="2008" name="DNA Res.">
        <title>Comparative genome analysis of Lactobacillus reuteri and Lactobacillus fermentum reveal a genomic island for reuterin and cobalamin production.</title>
        <authorList>
            <person name="Morita H."/>
            <person name="Toh H."/>
            <person name="Fukuda S."/>
            <person name="Horikawa H."/>
            <person name="Oshima K."/>
            <person name="Suzuki T."/>
            <person name="Murakami M."/>
            <person name="Hisamatsu S."/>
            <person name="Kato Y."/>
            <person name="Takizawa T."/>
            <person name="Fukuoka H."/>
            <person name="Yoshimura T."/>
            <person name="Itoh K."/>
            <person name="O'Sullivan D.J."/>
            <person name="McKay L.L."/>
            <person name="Ohno H."/>
            <person name="Kikuchi J."/>
            <person name="Masaoka T."/>
            <person name="Hattori M."/>
        </authorList>
    </citation>
    <scope>NUCLEOTIDE SEQUENCE [LARGE SCALE GENOMIC DNA]</scope>
    <source>
        <strain>JCM 1112</strain>
    </source>
</reference>
<feature type="chain" id="PRO_1000142417" description="Large ribosomal subunit protein uL5">
    <location>
        <begin position="1"/>
        <end position="180"/>
    </location>
</feature>
<proteinExistence type="inferred from homology"/>
<sequence length="180" mass="20171">MENRLKAKYENEIRPALIEKFNYSSVMQAPKIDKIVLNMGVGDATTNSKNLDEAVEELGLISGQKPLITKAKKSIAGFRLREGMSIGAKVTLRGERMYDFLDKLVNVALPRVRDFHGVSNKAFDGRGNYTLGIHEQLIFPEIDYDKVNRVRGLDVVIVTTAQTDEESRELLAQLGMPFAK</sequence>
<comment type="function">
    <text evidence="1">This is one of the proteins that bind and probably mediate the attachment of the 5S RNA into the large ribosomal subunit, where it forms part of the central protuberance. In the 70S ribosome it contacts protein S13 of the 30S subunit (bridge B1b), connecting the 2 subunits; this bridge is implicated in subunit movement. Contacts the P site tRNA; the 5S rRNA and some of its associated proteins might help stabilize positioning of ribosome-bound tRNAs.</text>
</comment>
<comment type="subunit">
    <text evidence="1">Part of the 50S ribosomal subunit; part of the 5S rRNA/L5/L18/L25 subcomplex. Contacts the 5S rRNA and the P site tRNA. Forms a bridge to the 30S subunit in the 70S ribosome.</text>
</comment>
<comment type="similarity">
    <text evidence="1">Belongs to the universal ribosomal protein uL5 family.</text>
</comment>